<comment type="function">
    <text evidence="1">One of the primary rRNA binding proteins, it binds directly to 16S rRNA where it nucleates assembly of the head domain of the 30S subunit. Is located at the subunit interface close to the decoding center.</text>
</comment>
<comment type="subunit">
    <text evidence="1">Part of the 30S ribosomal subunit.</text>
</comment>
<comment type="similarity">
    <text evidence="1">Belongs to the universal ribosomal protein uS7 family.</text>
</comment>
<sequence>MAKPLTERFYQPKELKVMGRWSVEDVVVNDPSLRPYINLEPRILPHSHGRHAKKPFGKAQVHIVERLINKVMRSGASSHKVGGHFMRREHRSLMGKKMKAYEVVKEAFMIIERRTKQNPIQVFIRAIENSAPREDTTTIAFGGIRYHMAVDVSPLRRLDIALKNIALGASAKCYRNKTSYAQALAEEIIAAANKDPKSFAYSKKEEIERIAQSSR</sequence>
<evidence type="ECO:0000255" key="1">
    <source>
        <dbReference type="HAMAP-Rule" id="MF_00480"/>
    </source>
</evidence>
<evidence type="ECO:0000305" key="2"/>
<gene>
    <name evidence="1" type="primary">rps7</name>
    <name type="ordered locus">TON_0223</name>
</gene>
<reference key="1">
    <citation type="journal article" date="2008" name="J. Bacteriol.">
        <title>The complete genome sequence of Thermococcus onnurineus NA1 reveals a mixed heterotrophic and carboxydotrophic metabolism.</title>
        <authorList>
            <person name="Lee H.S."/>
            <person name="Kang S.G."/>
            <person name="Bae S.S."/>
            <person name="Lim J.K."/>
            <person name="Cho Y."/>
            <person name="Kim Y.J."/>
            <person name="Jeon J.H."/>
            <person name="Cha S.-S."/>
            <person name="Kwon K.K."/>
            <person name="Kim H.-T."/>
            <person name="Park C.-J."/>
            <person name="Lee H.-W."/>
            <person name="Kim S.I."/>
            <person name="Chun J."/>
            <person name="Colwell R.R."/>
            <person name="Kim S.-J."/>
            <person name="Lee J.-H."/>
        </authorList>
    </citation>
    <scope>NUCLEOTIDE SEQUENCE [LARGE SCALE GENOMIC DNA]</scope>
    <source>
        <strain>NA1</strain>
    </source>
</reference>
<proteinExistence type="inferred from homology"/>
<name>RS7_THEON</name>
<keyword id="KW-0687">Ribonucleoprotein</keyword>
<keyword id="KW-0689">Ribosomal protein</keyword>
<keyword id="KW-0694">RNA-binding</keyword>
<keyword id="KW-0699">rRNA-binding</keyword>
<feature type="chain" id="PRO_1000126015" description="Small ribosomal subunit protein uS7">
    <location>
        <begin position="1"/>
        <end position="215"/>
    </location>
</feature>
<accession>B6YT21</accession>
<dbReference type="EMBL" id="CP000855">
    <property type="protein sequence ID" value="ACJ15708.1"/>
    <property type="molecule type" value="Genomic_DNA"/>
</dbReference>
<dbReference type="RefSeq" id="WP_012571181.1">
    <property type="nucleotide sequence ID" value="NC_011529.1"/>
</dbReference>
<dbReference type="SMR" id="B6YT21"/>
<dbReference type="STRING" id="523850.TON_0223"/>
<dbReference type="GeneID" id="7017883"/>
<dbReference type="KEGG" id="ton:TON_0223"/>
<dbReference type="PATRIC" id="fig|523850.10.peg.225"/>
<dbReference type="eggNOG" id="arCOG04254">
    <property type="taxonomic scope" value="Archaea"/>
</dbReference>
<dbReference type="HOGENOM" id="CLU_063975_0_0_2"/>
<dbReference type="OrthoDB" id="45346at2157"/>
<dbReference type="Proteomes" id="UP000002727">
    <property type="component" value="Chromosome"/>
</dbReference>
<dbReference type="GO" id="GO:0015935">
    <property type="term" value="C:small ribosomal subunit"/>
    <property type="evidence" value="ECO:0007669"/>
    <property type="project" value="InterPro"/>
</dbReference>
<dbReference type="GO" id="GO:0019843">
    <property type="term" value="F:rRNA binding"/>
    <property type="evidence" value="ECO:0007669"/>
    <property type="project" value="UniProtKB-UniRule"/>
</dbReference>
<dbReference type="GO" id="GO:0003735">
    <property type="term" value="F:structural constituent of ribosome"/>
    <property type="evidence" value="ECO:0007669"/>
    <property type="project" value="InterPro"/>
</dbReference>
<dbReference type="GO" id="GO:0006412">
    <property type="term" value="P:translation"/>
    <property type="evidence" value="ECO:0007669"/>
    <property type="project" value="UniProtKB-UniRule"/>
</dbReference>
<dbReference type="CDD" id="cd14867">
    <property type="entry name" value="uS7_Eukaryote"/>
    <property type="match status" value="1"/>
</dbReference>
<dbReference type="Gene3D" id="1.10.455.10">
    <property type="entry name" value="Ribosomal protein S7 domain"/>
    <property type="match status" value="1"/>
</dbReference>
<dbReference type="HAMAP" id="MF_00480_A">
    <property type="entry name" value="Ribosomal_uS7_A"/>
    <property type="match status" value="1"/>
</dbReference>
<dbReference type="InterPro" id="IPR000235">
    <property type="entry name" value="Ribosomal_uS7"/>
</dbReference>
<dbReference type="InterPro" id="IPR026018">
    <property type="entry name" value="Ribosomal_uS7_arc"/>
</dbReference>
<dbReference type="InterPro" id="IPR023798">
    <property type="entry name" value="Ribosomal_uS7_dom"/>
</dbReference>
<dbReference type="InterPro" id="IPR036823">
    <property type="entry name" value="Ribosomal_uS7_dom_sf"/>
</dbReference>
<dbReference type="InterPro" id="IPR005716">
    <property type="entry name" value="Ribosomal_uS7_euk/arc"/>
</dbReference>
<dbReference type="NCBIfam" id="NF003106">
    <property type="entry name" value="PRK04027.1"/>
    <property type="match status" value="1"/>
</dbReference>
<dbReference type="NCBIfam" id="TIGR01028">
    <property type="entry name" value="uS7_euk_arch"/>
    <property type="match status" value="1"/>
</dbReference>
<dbReference type="PANTHER" id="PTHR11205">
    <property type="entry name" value="RIBOSOMAL PROTEIN S7"/>
    <property type="match status" value="1"/>
</dbReference>
<dbReference type="Pfam" id="PF00177">
    <property type="entry name" value="Ribosomal_S7"/>
    <property type="match status" value="1"/>
</dbReference>
<dbReference type="PIRSF" id="PIRSF002122">
    <property type="entry name" value="RPS7p_RPS7a_RPS5e_RPS7o"/>
    <property type="match status" value="1"/>
</dbReference>
<dbReference type="SUPFAM" id="SSF47973">
    <property type="entry name" value="Ribosomal protein S7"/>
    <property type="match status" value="1"/>
</dbReference>
<protein>
    <recommendedName>
        <fullName evidence="1">Small ribosomal subunit protein uS7</fullName>
    </recommendedName>
    <alternativeName>
        <fullName evidence="2">30S ribosomal protein S7</fullName>
    </alternativeName>
</protein>
<organism>
    <name type="scientific">Thermococcus onnurineus (strain NA1)</name>
    <dbReference type="NCBI Taxonomy" id="523850"/>
    <lineage>
        <taxon>Archaea</taxon>
        <taxon>Methanobacteriati</taxon>
        <taxon>Methanobacteriota</taxon>
        <taxon>Thermococci</taxon>
        <taxon>Thermococcales</taxon>
        <taxon>Thermococcaceae</taxon>
        <taxon>Thermococcus</taxon>
    </lineage>
</organism>